<evidence type="ECO:0000255" key="1">
    <source>
        <dbReference type="HAMAP-Rule" id="MF_00106"/>
    </source>
</evidence>
<organism>
    <name type="scientific">Streptococcus suis (strain 98HAH33)</name>
    <dbReference type="NCBI Taxonomy" id="391296"/>
    <lineage>
        <taxon>Bacteria</taxon>
        <taxon>Bacillati</taxon>
        <taxon>Bacillota</taxon>
        <taxon>Bacilli</taxon>
        <taxon>Lactobacillales</taxon>
        <taxon>Streptococcaceae</taxon>
        <taxon>Streptococcus</taxon>
    </lineage>
</organism>
<protein>
    <recommendedName>
        <fullName evidence="1">Mannonate dehydratase</fullName>
        <ecNumber evidence="1">4.2.1.8</ecNumber>
    </recommendedName>
    <alternativeName>
        <fullName evidence="1">D-mannonate hydro-lyase</fullName>
    </alternativeName>
</protein>
<accession>A4W1U2</accession>
<sequence length="366" mass="40808">MKMSFRWYGKKDPVTLEEIKAIPGMQGIVTAVYDVPVGQAWPLENILELKKMVEEAGLEITVIESIPVHEDIKQGKPNRDALIENYKTSIRNVGAAGIPVVCYNFMPVFDWTRSDLHHPLPDGSTSLAFLKSDLAGVDPVADDLNLPGWDSSYSKEEMKAIIENYRQNISEEDLWANLEYFIKAILPTAEEAGVKMAIHPDDPPYGIFGLPRIITGQEAVERFLNLYDSEHNGITMCVGSYASDPKNDVLAMTEYALKRNRINFMHTRNVTAGAWGFQETAHLSQAGDIDMNAVVKLLVDYDWQGSLRPDHGRRIWGDQTKTPGYGLYDRALGATYFNGLYEANMRAAGKTPDFGIKAKTVGTKEG</sequence>
<dbReference type="EC" id="4.2.1.8" evidence="1"/>
<dbReference type="EMBL" id="CP000408">
    <property type="protein sequence ID" value="ABP92331.1"/>
    <property type="molecule type" value="Genomic_DNA"/>
</dbReference>
<dbReference type="SMR" id="A4W1U2"/>
<dbReference type="KEGG" id="ssv:SSU98_1173"/>
<dbReference type="HOGENOM" id="CLU_058621_1_0_9"/>
<dbReference type="UniPathway" id="UPA00246"/>
<dbReference type="GO" id="GO:0008198">
    <property type="term" value="F:ferrous iron binding"/>
    <property type="evidence" value="ECO:0007669"/>
    <property type="project" value="TreeGrafter"/>
</dbReference>
<dbReference type="GO" id="GO:0030145">
    <property type="term" value="F:manganese ion binding"/>
    <property type="evidence" value="ECO:0007669"/>
    <property type="project" value="TreeGrafter"/>
</dbReference>
<dbReference type="GO" id="GO:0008927">
    <property type="term" value="F:mannonate dehydratase activity"/>
    <property type="evidence" value="ECO:0007669"/>
    <property type="project" value="UniProtKB-UniRule"/>
</dbReference>
<dbReference type="GO" id="GO:0042840">
    <property type="term" value="P:D-glucuronate catabolic process"/>
    <property type="evidence" value="ECO:0007669"/>
    <property type="project" value="TreeGrafter"/>
</dbReference>
<dbReference type="FunFam" id="3.20.20.150:FF:000010">
    <property type="entry name" value="Mannonate dehydratase"/>
    <property type="match status" value="1"/>
</dbReference>
<dbReference type="Gene3D" id="3.20.20.150">
    <property type="entry name" value="Divalent-metal-dependent TIM barrel enzymes"/>
    <property type="match status" value="1"/>
</dbReference>
<dbReference type="HAMAP" id="MF_00106">
    <property type="entry name" value="UxuA"/>
    <property type="match status" value="1"/>
</dbReference>
<dbReference type="InterPro" id="IPR004628">
    <property type="entry name" value="Man_deHydtase"/>
</dbReference>
<dbReference type="InterPro" id="IPR036237">
    <property type="entry name" value="Xyl_isomerase-like_sf"/>
</dbReference>
<dbReference type="NCBIfam" id="NF003027">
    <property type="entry name" value="PRK03906.1"/>
    <property type="match status" value="2"/>
</dbReference>
<dbReference type="PANTHER" id="PTHR30387">
    <property type="entry name" value="MANNONATE DEHYDRATASE"/>
    <property type="match status" value="1"/>
</dbReference>
<dbReference type="PANTHER" id="PTHR30387:SF2">
    <property type="entry name" value="MANNONATE DEHYDRATASE"/>
    <property type="match status" value="1"/>
</dbReference>
<dbReference type="Pfam" id="PF03786">
    <property type="entry name" value="UxuA"/>
    <property type="match status" value="1"/>
</dbReference>
<dbReference type="PIRSF" id="PIRSF016049">
    <property type="entry name" value="Man_dehyd"/>
    <property type="match status" value="1"/>
</dbReference>
<dbReference type="SUPFAM" id="SSF51658">
    <property type="entry name" value="Xylose isomerase-like"/>
    <property type="match status" value="1"/>
</dbReference>
<gene>
    <name evidence="1" type="primary">uxuA</name>
    <name type="ordered locus">SSU98_1173</name>
</gene>
<comment type="function">
    <text evidence="1">Catalyzes the dehydration of D-mannonate.</text>
</comment>
<comment type="catalytic activity">
    <reaction evidence="1">
        <text>D-mannonate = 2-dehydro-3-deoxy-D-gluconate + H2O</text>
        <dbReference type="Rhea" id="RHEA:20097"/>
        <dbReference type="ChEBI" id="CHEBI:15377"/>
        <dbReference type="ChEBI" id="CHEBI:17767"/>
        <dbReference type="ChEBI" id="CHEBI:57990"/>
        <dbReference type="EC" id="4.2.1.8"/>
    </reaction>
</comment>
<comment type="cofactor">
    <cofactor evidence="1">
        <name>Fe(2+)</name>
        <dbReference type="ChEBI" id="CHEBI:29033"/>
    </cofactor>
    <cofactor evidence="1">
        <name>Mn(2+)</name>
        <dbReference type="ChEBI" id="CHEBI:29035"/>
    </cofactor>
</comment>
<comment type="pathway">
    <text evidence="1">Carbohydrate metabolism; pentose and glucuronate interconversion.</text>
</comment>
<comment type="similarity">
    <text evidence="1">Belongs to the mannonate dehydratase family.</text>
</comment>
<keyword id="KW-0408">Iron</keyword>
<keyword id="KW-0456">Lyase</keyword>
<keyword id="KW-0464">Manganese</keyword>
<proteinExistence type="inferred from homology"/>
<feature type="chain" id="PRO_1000034338" description="Mannonate dehydratase">
    <location>
        <begin position="1"/>
        <end position="366"/>
    </location>
</feature>
<reference key="1">
    <citation type="journal article" date="2007" name="PLoS ONE">
        <title>A glimpse of streptococcal toxic shock syndrome from comparative genomics of S. suis 2 Chinese isolates.</title>
        <authorList>
            <person name="Chen C."/>
            <person name="Tang J."/>
            <person name="Dong W."/>
            <person name="Wang C."/>
            <person name="Feng Y."/>
            <person name="Wang J."/>
            <person name="Zheng F."/>
            <person name="Pan X."/>
            <person name="Liu D."/>
            <person name="Li M."/>
            <person name="Song Y."/>
            <person name="Zhu X."/>
            <person name="Sun H."/>
            <person name="Feng T."/>
            <person name="Guo Z."/>
            <person name="Ju A."/>
            <person name="Ge J."/>
            <person name="Dong Y."/>
            <person name="Sun W."/>
            <person name="Jiang Y."/>
            <person name="Wang J."/>
            <person name="Yan J."/>
            <person name="Yang H."/>
            <person name="Wang X."/>
            <person name="Gao G.F."/>
            <person name="Yang R."/>
            <person name="Wang J."/>
            <person name="Yu J."/>
        </authorList>
    </citation>
    <scope>NUCLEOTIDE SEQUENCE [LARGE SCALE GENOMIC DNA]</scope>
    <source>
        <strain>98HAH33</strain>
    </source>
</reference>
<name>UXUA_STRS2</name>